<comment type="function">
    <text evidence="7">May be involved in the biosynthesis of ent-kaurene diterpenoids natural products such as oridonin, miltiradiene, eriocalyxin B and nezukol, known to exhibit antitumor, anti-inflammatory and antibacterial activities.</text>
</comment>
<comment type="cofactor">
    <cofactor evidence="3">
        <name>Mg(2+)</name>
        <dbReference type="ChEBI" id="CHEBI:18420"/>
    </cofactor>
    <text evidence="3">Binds 3 Mg(2+) ions per subunit.</text>
</comment>
<comment type="pathway">
    <text evidence="7">Secondary metabolite biosynthesis; terpenoid biosynthesis.</text>
</comment>
<comment type="subcellular location">
    <subcellularLocation>
        <location evidence="1">Plastid</location>
        <location evidence="1">Chloroplast</location>
    </subcellularLocation>
</comment>
<comment type="tissue specificity">
    <text evidence="4">Expressed in leaves.</text>
</comment>
<comment type="domain">
    <text evidence="6">The Asp-Asp-Xaa-Xaa-Asp/Glu (DDXXD/E) motif is important for the catalytic activity, presumably through binding to Mg(2+).</text>
</comment>
<comment type="similarity">
    <text evidence="6">Belongs to the terpene synthase family.</text>
</comment>
<dbReference type="EC" id="4.2.3.-" evidence="2"/>
<dbReference type="EMBL" id="KY661362">
    <property type="protein sequence ID" value="ARO38145.1"/>
    <property type="molecule type" value="mRNA"/>
</dbReference>
<dbReference type="SMR" id="A0A1W6QDI6"/>
<dbReference type="UniPathway" id="UPA00213"/>
<dbReference type="GO" id="GO:0009507">
    <property type="term" value="C:chloroplast"/>
    <property type="evidence" value="ECO:0007669"/>
    <property type="project" value="UniProtKB-SubCell"/>
</dbReference>
<dbReference type="GO" id="GO:0000287">
    <property type="term" value="F:magnesium ion binding"/>
    <property type="evidence" value="ECO:0007669"/>
    <property type="project" value="InterPro"/>
</dbReference>
<dbReference type="GO" id="GO:0010333">
    <property type="term" value="F:terpene synthase activity"/>
    <property type="evidence" value="ECO:0007669"/>
    <property type="project" value="InterPro"/>
</dbReference>
<dbReference type="GO" id="GO:0009686">
    <property type="term" value="P:gibberellin biosynthetic process"/>
    <property type="evidence" value="ECO:0007669"/>
    <property type="project" value="TreeGrafter"/>
</dbReference>
<dbReference type="GO" id="GO:1901946">
    <property type="term" value="P:miltiradiene biosynthetic process"/>
    <property type="evidence" value="ECO:0000314"/>
    <property type="project" value="UniProtKB"/>
</dbReference>
<dbReference type="GO" id="GO:0016114">
    <property type="term" value="P:terpenoid biosynthetic process"/>
    <property type="evidence" value="ECO:0000314"/>
    <property type="project" value="UniProtKB"/>
</dbReference>
<dbReference type="CDD" id="cd00684">
    <property type="entry name" value="Terpene_cyclase_plant_C1"/>
    <property type="match status" value="1"/>
</dbReference>
<dbReference type="FunFam" id="1.50.10.130:FF:000002">
    <property type="entry name" value="Ent-copalyl diphosphate synthase, chloroplastic"/>
    <property type="match status" value="1"/>
</dbReference>
<dbReference type="FunFam" id="1.10.600.10:FF:000005">
    <property type="entry name" value="Ent-kaur-16-ene synthase, chloroplastic"/>
    <property type="match status" value="1"/>
</dbReference>
<dbReference type="Gene3D" id="1.50.10.160">
    <property type="match status" value="1"/>
</dbReference>
<dbReference type="Gene3D" id="1.10.600.10">
    <property type="entry name" value="Farnesyl Diphosphate Synthase"/>
    <property type="match status" value="1"/>
</dbReference>
<dbReference type="Gene3D" id="1.50.10.130">
    <property type="entry name" value="Terpene synthase, N-terminal domain"/>
    <property type="match status" value="1"/>
</dbReference>
<dbReference type="InterPro" id="IPR008949">
    <property type="entry name" value="Isoprenoid_synthase_dom_sf"/>
</dbReference>
<dbReference type="InterPro" id="IPR044814">
    <property type="entry name" value="Terpene_cyclase_plant_C1"/>
</dbReference>
<dbReference type="InterPro" id="IPR001906">
    <property type="entry name" value="Terpene_synth_N"/>
</dbReference>
<dbReference type="InterPro" id="IPR036965">
    <property type="entry name" value="Terpene_synth_N_sf"/>
</dbReference>
<dbReference type="InterPro" id="IPR050148">
    <property type="entry name" value="Terpene_synthase-like"/>
</dbReference>
<dbReference type="InterPro" id="IPR005630">
    <property type="entry name" value="Terpene_synthase_metal-bd"/>
</dbReference>
<dbReference type="InterPro" id="IPR008930">
    <property type="entry name" value="Terpenoid_cyclase/PrenylTrfase"/>
</dbReference>
<dbReference type="PANTHER" id="PTHR31739">
    <property type="entry name" value="ENT-COPALYL DIPHOSPHATE SYNTHASE, CHLOROPLASTIC"/>
    <property type="match status" value="1"/>
</dbReference>
<dbReference type="PANTHER" id="PTHR31739:SF3">
    <property type="entry name" value="ENT-KAUR-16-ENE SYNTHASE, CHLOROPLASTIC"/>
    <property type="match status" value="1"/>
</dbReference>
<dbReference type="Pfam" id="PF01397">
    <property type="entry name" value="Terpene_synth"/>
    <property type="match status" value="1"/>
</dbReference>
<dbReference type="Pfam" id="PF03936">
    <property type="entry name" value="Terpene_synth_C"/>
    <property type="match status" value="1"/>
</dbReference>
<dbReference type="SFLD" id="SFLDG01014">
    <property type="entry name" value="Terpene_Cyclase_Like_1_N-term"/>
    <property type="match status" value="1"/>
</dbReference>
<dbReference type="SUPFAM" id="SSF48239">
    <property type="entry name" value="Terpenoid cyclases/Protein prenyltransferases"/>
    <property type="match status" value="1"/>
</dbReference>
<dbReference type="SUPFAM" id="SSF48576">
    <property type="entry name" value="Terpenoid synthases"/>
    <property type="match status" value="1"/>
</dbReference>
<organism>
    <name type="scientific">Isodon rubescens</name>
    <name type="common">Rabdosia rubescens</name>
    <dbReference type="NCBI Taxonomy" id="587669"/>
    <lineage>
        <taxon>Eukaryota</taxon>
        <taxon>Viridiplantae</taxon>
        <taxon>Streptophyta</taxon>
        <taxon>Embryophyta</taxon>
        <taxon>Tracheophyta</taxon>
        <taxon>Spermatophyta</taxon>
        <taxon>Magnoliopsida</taxon>
        <taxon>eudicotyledons</taxon>
        <taxon>Gunneridae</taxon>
        <taxon>Pentapetalae</taxon>
        <taxon>asterids</taxon>
        <taxon>lamiids</taxon>
        <taxon>Lamiales</taxon>
        <taxon>Lamiaceae</taxon>
        <taxon>Nepetoideae</taxon>
        <taxon>Ocimeae</taxon>
        <taxon>Isodoninae</taxon>
        <taxon>Isodon</taxon>
    </lineage>
</organism>
<protein>
    <recommendedName>
        <fullName evidence="5">Terpene synthase 6, chloroplastic</fullName>
        <shortName evidence="5">IrTPS6</shortName>
        <ecNumber evidence="2">4.2.3.-</ecNumber>
    </recommendedName>
</protein>
<feature type="chain" id="PRO_0000452383" description="Terpene synthase 6, chloroplastic">
    <location>
        <begin position="1" status="less than"/>
        <end position="681"/>
    </location>
</feature>
<feature type="short sequence motif" description="DDXXD motif" evidence="6">
    <location>
        <begin position="433"/>
        <end position="437"/>
    </location>
</feature>
<feature type="binding site" evidence="3">
    <location>
        <position position="433"/>
    </location>
    <ligand>
        <name>Mg(2+)</name>
        <dbReference type="ChEBI" id="CHEBI:18420"/>
        <label>1</label>
    </ligand>
</feature>
<feature type="binding site" evidence="3">
    <location>
        <position position="433"/>
    </location>
    <ligand>
        <name>Mg(2+)</name>
        <dbReference type="ChEBI" id="CHEBI:18420"/>
        <label>2</label>
    </ligand>
</feature>
<feature type="binding site" evidence="3">
    <location>
        <position position="437"/>
    </location>
    <ligand>
        <name>Mg(2+)</name>
        <dbReference type="ChEBI" id="CHEBI:18420"/>
        <label>1</label>
    </ligand>
</feature>
<feature type="binding site" evidence="3">
    <location>
        <position position="437"/>
    </location>
    <ligand>
        <name>Mg(2+)</name>
        <dbReference type="ChEBI" id="CHEBI:18420"/>
        <label>2</label>
    </ligand>
</feature>
<feature type="binding site" evidence="3">
    <location>
        <position position="577"/>
    </location>
    <ligand>
        <name>Mg(2+)</name>
        <dbReference type="ChEBI" id="CHEBI:18420"/>
        <label>3</label>
    </ligand>
</feature>
<feature type="binding site" evidence="3">
    <location>
        <position position="585"/>
    </location>
    <ligand>
        <name>Mg(2+)</name>
        <dbReference type="ChEBI" id="CHEBI:18420"/>
        <label>3</label>
    </ligand>
</feature>
<feature type="non-terminal residue" evidence="8">
    <location>
        <position position="1"/>
    </location>
</feature>
<sequence length="681" mass="78191">LLNKDVLSSTLASILALHKWGLGQHHIAKGLHFLELNFASATDNSQITPLGFDIVFPAMLDHAADLSLNLRLDPTTLNDLMNRRDLELQRCTENGSAETEVYMAYIGEGMGKLHDWESVMKYQRKNGSLFNSPSTTAAAFIALRNSDCLNYLYSALNKFGSAVPAVYPLDIYSQLCIVDNLERLGISRFFSTEIQSVLDETYRCWLQGDEEIFMDASTCGLAFRTLRMNGYNVTSDPITKILQECFSSSFRGNMTDINTTLEIYRASELILYPEERDLDQHNLRLKTFLEQELSSNGFIQSCQLGRNINAEVNQAIEYPFYAIMDRMAKRKNIENYNIDNTRILKTSYRSPNFGNKDFLSLSVEDFNRCQVIHREELRELERWVIENRLDELKFARSKAAYCYFSAAATIFSPELSDARMSWAKNALMTTMVDDLFDVTGSVEEMKNLIQLVELWDVDVSTECCSHKVQILFSALKRTICEVGDRAYQLQGRSIRSHIIVIWLDTLHSMMKEVEWTRDKFVPTMDEYVSNAYVSFALGPIVLPALYLVGPKLSEEMVNHSEYHNLFKLMSTCGRLMNDIRGYEREHDDGKLNAMSLYIMNNGGEITPEVAILEIKSWNDRQRRDLLSLVLEEKSVIPKACKDLFWHMCSVVHLFYNKDDGFWSQELIEVVNQVIHQPILLN</sequence>
<keyword id="KW-0150">Chloroplast</keyword>
<keyword id="KW-0456">Lyase</keyword>
<keyword id="KW-0460">Magnesium</keyword>
<keyword id="KW-0479">Metal-binding</keyword>
<keyword id="KW-0934">Plastid</keyword>
<proteinExistence type="evidence at transcript level"/>
<gene>
    <name evidence="5" type="primary">TPS6</name>
</gene>
<reference key="1">
    <citation type="journal article" date="2017" name="PLoS ONE">
        <title>Biosynthesis of the oxygenated diterpene nezukol in the medicinal plant Isodon rubescens is catalyzed by a pair of diterpene synthases.</title>
        <authorList>
            <person name="Pelot K.A."/>
            <person name="Hagelthorn L.M."/>
            <person name="Addison J.B."/>
            <person name="Zerbe P."/>
        </authorList>
    </citation>
    <scope>NUCLEOTIDE SEQUENCE [MRNA]</scope>
    <scope>FUNCTION</scope>
    <scope>PATHWAY</scope>
    <scope>TISSUE SPECIFICITY</scope>
</reference>
<accession>A0A1W6QDI6</accession>
<evidence type="ECO:0000250" key="1">
    <source>
        <dbReference type="UniProtKB" id="A0A0U4CDK4"/>
    </source>
</evidence>
<evidence type="ECO:0000250" key="2">
    <source>
        <dbReference type="UniProtKB" id="A0A1Z3GBK8"/>
    </source>
</evidence>
<evidence type="ECO:0000250" key="3">
    <source>
        <dbReference type="UniProtKB" id="Q40577"/>
    </source>
</evidence>
<evidence type="ECO:0000269" key="4">
    <source>
    </source>
</evidence>
<evidence type="ECO:0000303" key="5">
    <source>
    </source>
</evidence>
<evidence type="ECO:0000305" key="6"/>
<evidence type="ECO:0000305" key="7">
    <source>
    </source>
</evidence>
<evidence type="ECO:0000312" key="8">
    <source>
        <dbReference type="EMBL" id="ARO38145.1"/>
    </source>
</evidence>
<name>TPS6_ISORU</name>